<organism>
    <name type="scientific">Sinorhizobium medicae (strain WSM419)</name>
    <name type="common">Ensifer medicae</name>
    <dbReference type="NCBI Taxonomy" id="366394"/>
    <lineage>
        <taxon>Bacteria</taxon>
        <taxon>Pseudomonadati</taxon>
        <taxon>Pseudomonadota</taxon>
        <taxon>Alphaproteobacteria</taxon>
        <taxon>Hyphomicrobiales</taxon>
        <taxon>Rhizobiaceae</taxon>
        <taxon>Sinorhizobium/Ensifer group</taxon>
        <taxon>Sinorhizobium</taxon>
    </lineage>
</organism>
<proteinExistence type="inferred from homology"/>
<reference key="1">
    <citation type="submission" date="2007-06" db="EMBL/GenBank/DDBJ databases">
        <title>Complete sequence of Sinorhizobium medicae WSM419 chromosome.</title>
        <authorList>
            <consortium name="US DOE Joint Genome Institute"/>
            <person name="Copeland A."/>
            <person name="Lucas S."/>
            <person name="Lapidus A."/>
            <person name="Barry K."/>
            <person name="Glavina del Rio T."/>
            <person name="Dalin E."/>
            <person name="Tice H."/>
            <person name="Pitluck S."/>
            <person name="Chain P."/>
            <person name="Malfatti S."/>
            <person name="Shin M."/>
            <person name="Vergez L."/>
            <person name="Schmutz J."/>
            <person name="Larimer F."/>
            <person name="Land M."/>
            <person name="Hauser L."/>
            <person name="Kyrpides N."/>
            <person name="Mikhailova N."/>
            <person name="Reeve W.G."/>
            <person name="Richardson P."/>
        </authorList>
    </citation>
    <scope>NUCLEOTIDE SEQUENCE [LARGE SCALE GENOMIC DNA]</scope>
    <source>
        <strain>WSM419</strain>
    </source>
</reference>
<evidence type="ECO:0000255" key="1">
    <source>
        <dbReference type="HAMAP-Rule" id="MF_00184"/>
    </source>
</evidence>
<evidence type="ECO:0000255" key="2">
    <source>
        <dbReference type="PROSITE-ProRule" id="PRU01228"/>
    </source>
</evidence>
<dbReference type="EC" id="6.1.1.3" evidence="1"/>
<dbReference type="EMBL" id="CP000738">
    <property type="protein sequence ID" value="ABR59907.1"/>
    <property type="molecule type" value="Genomic_DNA"/>
</dbReference>
<dbReference type="RefSeq" id="WP_011975231.1">
    <property type="nucleotide sequence ID" value="NC_009636.1"/>
</dbReference>
<dbReference type="RefSeq" id="YP_001326742.1">
    <property type="nucleotide sequence ID" value="NC_009636.1"/>
</dbReference>
<dbReference type="SMR" id="A6U8C7"/>
<dbReference type="STRING" id="366394.Smed_1054"/>
<dbReference type="KEGG" id="smd:Smed_1054"/>
<dbReference type="PATRIC" id="fig|366394.8.peg.4177"/>
<dbReference type="eggNOG" id="COG0441">
    <property type="taxonomic scope" value="Bacteria"/>
</dbReference>
<dbReference type="HOGENOM" id="CLU_008554_0_1_5"/>
<dbReference type="OrthoDB" id="9802304at2"/>
<dbReference type="Proteomes" id="UP000001108">
    <property type="component" value="Chromosome"/>
</dbReference>
<dbReference type="GO" id="GO:0005829">
    <property type="term" value="C:cytosol"/>
    <property type="evidence" value="ECO:0007669"/>
    <property type="project" value="TreeGrafter"/>
</dbReference>
<dbReference type="GO" id="GO:0005524">
    <property type="term" value="F:ATP binding"/>
    <property type="evidence" value="ECO:0007669"/>
    <property type="project" value="UniProtKB-UniRule"/>
</dbReference>
<dbReference type="GO" id="GO:0046872">
    <property type="term" value="F:metal ion binding"/>
    <property type="evidence" value="ECO:0007669"/>
    <property type="project" value="UniProtKB-KW"/>
</dbReference>
<dbReference type="GO" id="GO:0004829">
    <property type="term" value="F:threonine-tRNA ligase activity"/>
    <property type="evidence" value="ECO:0007669"/>
    <property type="project" value="UniProtKB-UniRule"/>
</dbReference>
<dbReference type="GO" id="GO:0000049">
    <property type="term" value="F:tRNA binding"/>
    <property type="evidence" value="ECO:0007669"/>
    <property type="project" value="UniProtKB-KW"/>
</dbReference>
<dbReference type="GO" id="GO:0006435">
    <property type="term" value="P:threonyl-tRNA aminoacylation"/>
    <property type="evidence" value="ECO:0007669"/>
    <property type="project" value="UniProtKB-UniRule"/>
</dbReference>
<dbReference type="CDD" id="cd01667">
    <property type="entry name" value="TGS_ThrRS"/>
    <property type="match status" value="1"/>
</dbReference>
<dbReference type="CDD" id="cd00860">
    <property type="entry name" value="ThrRS_anticodon"/>
    <property type="match status" value="1"/>
</dbReference>
<dbReference type="CDD" id="cd00771">
    <property type="entry name" value="ThrRS_core"/>
    <property type="match status" value="1"/>
</dbReference>
<dbReference type="FunFam" id="3.30.54.20:FF:000002">
    <property type="entry name" value="Threonine--tRNA ligase"/>
    <property type="match status" value="1"/>
</dbReference>
<dbReference type="FunFam" id="3.30.930.10:FF:000002">
    <property type="entry name" value="Threonine--tRNA ligase"/>
    <property type="match status" value="1"/>
</dbReference>
<dbReference type="FunFam" id="3.40.50.800:FF:000001">
    <property type="entry name" value="Threonine--tRNA ligase"/>
    <property type="match status" value="1"/>
</dbReference>
<dbReference type="FunFam" id="3.30.980.10:FF:000005">
    <property type="entry name" value="Threonyl-tRNA synthetase, mitochondrial"/>
    <property type="match status" value="1"/>
</dbReference>
<dbReference type="Gene3D" id="3.10.20.30">
    <property type="match status" value="1"/>
</dbReference>
<dbReference type="Gene3D" id="3.30.54.20">
    <property type="match status" value="1"/>
</dbReference>
<dbReference type="Gene3D" id="3.40.50.800">
    <property type="entry name" value="Anticodon-binding domain"/>
    <property type="match status" value="1"/>
</dbReference>
<dbReference type="Gene3D" id="3.30.930.10">
    <property type="entry name" value="Bira Bifunctional Protein, Domain 2"/>
    <property type="match status" value="1"/>
</dbReference>
<dbReference type="Gene3D" id="3.30.980.10">
    <property type="entry name" value="Threonyl-trna Synthetase, Chain A, domain 2"/>
    <property type="match status" value="1"/>
</dbReference>
<dbReference type="HAMAP" id="MF_00184">
    <property type="entry name" value="Thr_tRNA_synth"/>
    <property type="match status" value="1"/>
</dbReference>
<dbReference type="InterPro" id="IPR002314">
    <property type="entry name" value="aa-tRNA-synt_IIb"/>
</dbReference>
<dbReference type="InterPro" id="IPR006195">
    <property type="entry name" value="aa-tRNA-synth_II"/>
</dbReference>
<dbReference type="InterPro" id="IPR045864">
    <property type="entry name" value="aa-tRNA-synth_II/BPL/LPL"/>
</dbReference>
<dbReference type="InterPro" id="IPR004154">
    <property type="entry name" value="Anticodon-bd"/>
</dbReference>
<dbReference type="InterPro" id="IPR036621">
    <property type="entry name" value="Anticodon-bd_dom_sf"/>
</dbReference>
<dbReference type="InterPro" id="IPR012675">
    <property type="entry name" value="Beta-grasp_dom_sf"/>
</dbReference>
<dbReference type="InterPro" id="IPR004095">
    <property type="entry name" value="TGS"/>
</dbReference>
<dbReference type="InterPro" id="IPR012676">
    <property type="entry name" value="TGS-like"/>
</dbReference>
<dbReference type="InterPro" id="IPR002320">
    <property type="entry name" value="Thr-tRNA-ligase_IIa"/>
</dbReference>
<dbReference type="InterPro" id="IPR018163">
    <property type="entry name" value="Thr/Ala-tRNA-synth_IIc_edit"/>
</dbReference>
<dbReference type="InterPro" id="IPR047246">
    <property type="entry name" value="ThrRS_anticodon"/>
</dbReference>
<dbReference type="InterPro" id="IPR033728">
    <property type="entry name" value="ThrRS_core"/>
</dbReference>
<dbReference type="InterPro" id="IPR012947">
    <property type="entry name" value="tRNA_SAD"/>
</dbReference>
<dbReference type="NCBIfam" id="TIGR00418">
    <property type="entry name" value="thrS"/>
    <property type="match status" value="1"/>
</dbReference>
<dbReference type="PANTHER" id="PTHR11451:SF44">
    <property type="entry name" value="THREONINE--TRNA LIGASE, CHLOROPLASTIC_MITOCHONDRIAL 2"/>
    <property type="match status" value="1"/>
</dbReference>
<dbReference type="PANTHER" id="PTHR11451">
    <property type="entry name" value="THREONINE-TRNA LIGASE"/>
    <property type="match status" value="1"/>
</dbReference>
<dbReference type="Pfam" id="PF03129">
    <property type="entry name" value="HGTP_anticodon"/>
    <property type="match status" value="1"/>
</dbReference>
<dbReference type="Pfam" id="PF02824">
    <property type="entry name" value="TGS"/>
    <property type="match status" value="1"/>
</dbReference>
<dbReference type="Pfam" id="PF00587">
    <property type="entry name" value="tRNA-synt_2b"/>
    <property type="match status" value="1"/>
</dbReference>
<dbReference type="Pfam" id="PF07973">
    <property type="entry name" value="tRNA_SAD"/>
    <property type="match status" value="1"/>
</dbReference>
<dbReference type="PRINTS" id="PR01047">
    <property type="entry name" value="TRNASYNTHTHR"/>
</dbReference>
<dbReference type="SMART" id="SM00863">
    <property type="entry name" value="tRNA_SAD"/>
    <property type="match status" value="1"/>
</dbReference>
<dbReference type="SUPFAM" id="SSF52954">
    <property type="entry name" value="Class II aaRS ABD-related"/>
    <property type="match status" value="1"/>
</dbReference>
<dbReference type="SUPFAM" id="SSF55681">
    <property type="entry name" value="Class II aaRS and biotin synthetases"/>
    <property type="match status" value="1"/>
</dbReference>
<dbReference type="SUPFAM" id="SSF81271">
    <property type="entry name" value="TGS-like"/>
    <property type="match status" value="1"/>
</dbReference>
<dbReference type="SUPFAM" id="SSF55186">
    <property type="entry name" value="ThrRS/AlaRS common domain"/>
    <property type="match status" value="1"/>
</dbReference>
<dbReference type="PROSITE" id="PS50862">
    <property type="entry name" value="AA_TRNA_LIGASE_II"/>
    <property type="match status" value="1"/>
</dbReference>
<dbReference type="PROSITE" id="PS51880">
    <property type="entry name" value="TGS"/>
    <property type="match status" value="1"/>
</dbReference>
<protein>
    <recommendedName>
        <fullName evidence="1">Threonine--tRNA ligase</fullName>
        <ecNumber evidence="1">6.1.1.3</ecNumber>
    </recommendedName>
    <alternativeName>
        <fullName evidence="1">Threonyl-tRNA synthetase</fullName>
        <shortName evidence="1">ThrRS</shortName>
    </alternativeName>
</protein>
<sequence length="660" mass="74866">MSHSVSLTFPDGSVREFAPGTTGRDVAESISKSLAKKSVAIAIDGELRDLSDPVTEGRIEIVTREDKRALELIRHDAAHVMAEAVQELWPGTQVTIGPVIDNGFYYDFAKNEPFTPDDLPVIEKRMREIIARNKPFTKEVWSRDKAKEVFAVKGESYKVELVDAIPEGQDLKIYYQGDWFDLCRGPHMASTGQIGTAFKLMKVAGAYWRGDSNNPMLTRIYGTAWHTQEELDQYLHVLAEAEKRDHRRLGREMDLFHFQEEGPGVVFWHGKGWRIFQSLVAYMRRRLEGDYQEVNAPQVLDKSLWETSGHWGWYRDNMFKVTVAGDDTDDDRVFALKPMNCPGHIQIFKHGLKSYRELPVRLAEFGAVHRYEPSGALHGLMRVRGFTQDDAHIFCTDEQMAAECLKINDLILSVYEDFGFKEIVVKLSTRPEKRVGSDELWDRAEAVMTEVLKTIEAQSEGRIKTGILPGEGAFYGPKFEYTLKDAIGREWQCGTTQVDFNLPERFGAFYIDSESEKRQPVMIHRAICGSMERFLGILLENFAGHMPLWISPLQVVVATITSEADDYGREVAERLRDAGLTVETDFRNEKINYKVREHSVTKVPVIVVCGKREAEERSVNIRRLGSQAQTAMSLDEAVASLSAEATAPDLKRKAERTARA</sequence>
<gene>
    <name evidence="1" type="primary">thrS</name>
    <name type="ordered locus">Smed_1054</name>
</gene>
<name>SYT_SINMW</name>
<comment type="function">
    <text evidence="1">Catalyzes the attachment of threonine to tRNA(Thr) in a two-step reaction: L-threonine is first activated by ATP to form Thr-AMP and then transferred to the acceptor end of tRNA(Thr). Also edits incorrectly charged L-seryl-tRNA(Thr).</text>
</comment>
<comment type="catalytic activity">
    <reaction evidence="1">
        <text>tRNA(Thr) + L-threonine + ATP = L-threonyl-tRNA(Thr) + AMP + diphosphate + H(+)</text>
        <dbReference type="Rhea" id="RHEA:24624"/>
        <dbReference type="Rhea" id="RHEA-COMP:9670"/>
        <dbReference type="Rhea" id="RHEA-COMP:9704"/>
        <dbReference type="ChEBI" id="CHEBI:15378"/>
        <dbReference type="ChEBI" id="CHEBI:30616"/>
        <dbReference type="ChEBI" id="CHEBI:33019"/>
        <dbReference type="ChEBI" id="CHEBI:57926"/>
        <dbReference type="ChEBI" id="CHEBI:78442"/>
        <dbReference type="ChEBI" id="CHEBI:78534"/>
        <dbReference type="ChEBI" id="CHEBI:456215"/>
        <dbReference type="EC" id="6.1.1.3"/>
    </reaction>
</comment>
<comment type="cofactor">
    <cofactor evidence="1">
        <name>Zn(2+)</name>
        <dbReference type="ChEBI" id="CHEBI:29105"/>
    </cofactor>
    <text evidence="1">Binds 1 zinc ion per subunit.</text>
</comment>
<comment type="subunit">
    <text evidence="1">Homodimer.</text>
</comment>
<comment type="subcellular location">
    <subcellularLocation>
        <location evidence="1">Cytoplasm</location>
    </subcellularLocation>
</comment>
<comment type="similarity">
    <text evidence="1">Belongs to the class-II aminoacyl-tRNA synthetase family.</text>
</comment>
<accession>A6U8C7</accession>
<keyword id="KW-0030">Aminoacyl-tRNA synthetase</keyword>
<keyword id="KW-0067">ATP-binding</keyword>
<keyword id="KW-0963">Cytoplasm</keyword>
<keyword id="KW-0436">Ligase</keyword>
<keyword id="KW-0479">Metal-binding</keyword>
<keyword id="KW-0547">Nucleotide-binding</keyword>
<keyword id="KW-0648">Protein biosynthesis</keyword>
<keyword id="KW-0694">RNA-binding</keyword>
<keyword id="KW-0820">tRNA-binding</keyword>
<keyword id="KW-0862">Zinc</keyword>
<feature type="chain" id="PRO_1000020516" description="Threonine--tRNA ligase">
    <location>
        <begin position="1"/>
        <end position="660"/>
    </location>
</feature>
<feature type="domain" description="TGS" evidence="2">
    <location>
        <begin position="1"/>
        <end position="64"/>
    </location>
</feature>
<feature type="region of interest" description="Catalytic" evidence="1">
    <location>
        <begin position="245"/>
        <end position="547"/>
    </location>
</feature>
<feature type="binding site" evidence="1">
    <location>
        <position position="341"/>
    </location>
    <ligand>
        <name>Zn(2+)</name>
        <dbReference type="ChEBI" id="CHEBI:29105"/>
    </ligand>
</feature>
<feature type="binding site" evidence="1">
    <location>
        <position position="392"/>
    </location>
    <ligand>
        <name>Zn(2+)</name>
        <dbReference type="ChEBI" id="CHEBI:29105"/>
    </ligand>
</feature>
<feature type="binding site" evidence="1">
    <location>
        <position position="524"/>
    </location>
    <ligand>
        <name>Zn(2+)</name>
        <dbReference type="ChEBI" id="CHEBI:29105"/>
    </ligand>
</feature>